<name>CMPDT_STUST</name>
<evidence type="ECO:0000250" key="1">
    <source>
        <dbReference type="UniProtKB" id="P0A9J8"/>
    </source>
</evidence>
<evidence type="ECO:0000255" key="2"/>
<evidence type="ECO:0000255" key="3">
    <source>
        <dbReference type="PROSITE-ProRule" id="PRU00515"/>
    </source>
</evidence>
<evidence type="ECO:0000255" key="4">
    <source>
        <dbReference type="PROSITE-ProRule" id="PRU00517"/>
    </source>
</evidence>
<evidence type="ECO:0000255" key="5">
    <source>
        <dbReference type="PROSITE-ProRule" id="PRU01007"/>
    </source>
</evidence>
<evidence type="ECO:0000269" key="6">
    <source>
    </source>
</evidence>
<evidence type="ECO:0000303" key="7">
    <source>
    </source>
</evidence>
<evidence type="ECO:0000305" key="8"/>
<gene>
    <name evidence="7" type="primary">pheA</name>
</gene>
<accession>P27603</accession>
<accession>Q9RI01</accession>
<organism>
    <name type="scientific">Stutzerimonas stutzeri</name>
    <name type="common">Pseudomonas stutzeri</name>
    <dbReference type="NCBI Taxonomy" id="316"/>
    <lineage>
        <taxon>Bacteria</taxon>
        <taxon>Pseudomonadati</taxon>
        <taxon>Pseudomonadota</taxon>
        <taxon>Gammaproteobacteria</taxon>
        <taxon>Pseudomonadales</taxon>
        <taxon>Pseudomonadaceae</taxon>
        <taxon>Stutzerimonas</taxon>
    </lineage>
</organism>
<feature type="chain" id="PRO_0000119190" description="Bifunctional chorismate mutase/prephenate dehydratase">
    <location>
        <begin position="1"/>
        <end position="365"/>
    </location>
</feature>
<feature type="domain" description="Chorismate mutase" evidence="3">
    <location>
        <begin position="1"/>
        <end position="96"/>
    </location>
</feature>
<feature type="domain" description="Prephenate dehydratase" evidence="4">
    <location>
        <begin position="97"/>
        <end position="272"/>
    </location>
</feature>
<feature type="domain" description="ACT" evidence="5">
    <location>
        <begin position="284"/>
        <end position="361"/>
    </location>
</feature>
<feature type="binding site" evidence="1">
    <location>
        <position position="11"/>
    </location>
    <ligand>
        <name>substrate</name>
    </ligand>
</feature>
<feature type="binding site" evidence="1">
    <location>
        <position position="28"/>
    </location>
    <ligand>
        <name>substrate</name>
    </ligand>
</feature>
<feature type="binding site" evidence="1">
    <location>
        <position position="39"/>
    </location>
    <ligand>
        <name>substrate</name>
    </ligand>
</feature>
<feature type="binding site" evidence="1">
    <location>
        <position position="57"/>
    </location>
    <ligand>
        <name>substrate</name>
    </ligand>
</feature>
<feature type="site" description="Essential for prephenate dehydratase activity" evidence="2">
    <location>
        <position position="265"/>
    </location>
</feature>
<sequence>MSEADQLKALRVRIDSLDERILDLISERARCAQEVARVKTASWPKAEEAVFYRPEREAWVLKHIMELNKGPLDNEEMARLFREIMSSCLALEQPLRVAYLGPEGTFSQAAALKHFGHSVISKPMAAIDEVFREVVAGAVNFGVVPVENSTEGAVNHTLDSFLEHDIVICGEVELRIHHHLLVGETTKTDRITRIYSHAQSLAQCRKWLDAHYPNVERVAVSSNADAAKRVKSEWNSAAIAGDMAAQLYGLSKLAEKIEDRPVNSTRFLIIGSQEVPPTGDDKTSIIVSMRNKPGALHELLMPFHSNGIDLTRIETRPSRSGKWTYVFFIDCMGHHQDPLIKNVLEKIGHEAVALKVLGSYPKAVL</sequence>
<comment type="function">
    <text evidence="6">Catalyzes the Claisen rearrangement of chorismate to prephenate and the decarboxylation/dehydration of prephenate to phenylpyruvate.</text>
</comment>
<comment type="catalytic activity">
    <reaction evidence="6">
        <text>chorismate = prephenate</text>
        <dbReference type="Rhea" id="RHEA:13897"/>
        <dbReference type="ChEBI" id="CHEBI:29748"/>
        <dbReference type="ChEBI" id="CHEBI:29934"/>
        <dbReference type="EC" id="5.4.99.5"/>
    </reaction>
</comment>
<comment type="catalytic activity">
    <reaction evidence="6">
        <text>prephenate + H(+) = 3-phenylpyruvate + CO2 + H2O</text>
        <dbReference type="Rhea" id="RHEA:21648"/>
        <dbReference type="ChEBI" id="CHEBI:15377"/>
        <dbReference type="ChEBI" id="CHEBI:15378"/>
        <dbReference type="ChEBI" id="CHEBI:16526"/>
        <dbReference type="ChEBI" id="CHEBI:18005"/>
        <dbReference type="ChEBI" id="CHEBI:29934"/>
        <dbReference type="EC" id="4.2.1.51"/>
    </reaction>
</comment>
<comment type="pathway">
    <text evidence="8">Amino-acid biosynthesis; L-phenylalanine biosynthesis; phenylpyruvate from prephenate: step 1/1.</text>
</comment>
<comment type="pathway">
    <text evidence="8">Metabolic intermediate biosynthesis; prephenate biosynthesis; prephenate from chorismate: step 1/1.</text>
</comment>
<comment type="subcellular location">
    <subcellularLocation>
        <location evidence="1">Cytoplasm</location>
    </subcellularLocation>
</comment>
<proteinExistence type="evidence at protein level"/>
<dbReference type="EC" id="5.4.99.5" evidence="6"/>
<dbReference type="EC" id="4.2.1.51" evidence="6"/>
<dbReference type="EMBL" id="AF038578">
    <property type="protein sequence ID" value="AAD47360.1"/>
    <property type="molecule type" value="Genomic_DNA"/>
</dbReference>
<dbReference type="PIR" id="A44764">
    <property type="entry name" value="A44764"/>
</dbReference>
<dbReference type="SMR" id="P27603"/>
<dbReference type="eggNOG" id="COG0077">
    <property type="taxonomic scope" value="Bacteria"/>
</dbReference>
<dbReference type="eggNOG" id="COG1605">
    <property type="taxonomic scope" value="Bacteria"/>
</dbReference>
<dbReference type="UniPathway" id="UPA00120">
    <property type="reaction ID" value="UER00203"/>
</dbReference>
<dbReference type="UniPathway" id="UPA00121">
    <property type="reaction ID" value="UER00345"/>
</dbReference>
<dbReference type="GO" id="GO:0005737">
    <property type="term" value="C:cytoplasm"/>
    <property type="evidence" value="ECO:0007669"/>
    <property type="project" value="UniProtKB-SubCell"/>
</dbReference>
<dbReference type="GO" id="GO:0004106">
    <property type="term" value="F:chorismate mutase activity"/>
    <property type="evidence" value="ECO:0007669"/>
    <property type="project" value="UniProtKB-EC"/>
</dbReference>
<dbReference type="GO" id="GO:0004664">
    <property type="term" value="F:prephenate dehydratase activity"/>
    <property type="evidence" value="ECO:0007669"/>
    <property type="project" value="UniProtKB-EC"/>
</dbReference>
<dbReference type="GO" id="GO:0046417">
    <property type="term" value="P:chorismate metabolic process"/>
    <property type="evidence" value="ECO:0007669"/>
    <property type="project" value="InterPro"/>
</dbReference>
<dbReference type="GO" id="GO:0009094">
    <property type="term" value="P:L-phenylalanine biosynthetic process"/>
    <property type="evidence" value="ECO:0007669"/>
    <property type="project" value="UniProtKB-UniPathway"/>
</dbReference>
<dbReference type="CDD" id="cd04905">
    <property type="entry name" value="ACT_CM-PDT"/>
    <property type="match status" value="1"/>
</dbReference>
<dbReference type="CDD" id="cd13630">
    <property type="entry name" value="PBP2_PDT_1"/>
    <property type="match status" value="1"/>
</dbReference>
<dbReference type="FunFam" id="3.40.190.10:FF:000029">
    <property type="entry name" value="Chorismate mutase/Prephenate dehydratase"/>
    <property type="match status" value="1"/>
</dbReference>
<dbReference type="FunFam" id="3.40.190.10:FF:000034">
    <property type="entry name" value="Chorismate mutase/prephenate dehydratase"/>
    <property type="match status" value="1"/>
</dbReference>
<dbReference type="FunFam" id="1.20.59.10:FF:000004">
    <property type="entry name" value="Prephenate dehydratase"/>
    <property type="match status" value="1"/>
</dbReference>
<dbReference type="FunFam" id="3.30.70.260:FF:000012">
    <property type="entry name" value="Prephenate dehydratase"/>
    <property type="match status" value="1"/>
</dbReference>
<dbReference type="Gene3D" id="3.30.70.260">
    <property type="match status" value="1"/>
</dbReference>
<dbReference type="Gene3D" id="1.20.59.10">
    <property type="entry name" value="Chorismate mutase"/>
    <property type="match status" value="1"/>
</dbReference>
<dbReference type="Gene3D" id="3.40.190.10">
    <property type="entry name" value="Periplasmic binding protein-like II"/>
    <property type="match status" value="2"/>
</dbReference>
<dbReference type="InterPro" id="IPR045865">
    <property type="entry name" value="ACT-like_dom_sf"/>
</dbReference>
<dbReference type="InterPro" id="IPR002912">
    <property type="entry name" value="ACT_dom"/>
</dbReference>
<dbReference type="InterPro" id="IPR008242">
    <property type="entry name" value="Chor_mutase/pphenate_deHydtase"/>
</dbReference>
<dbReference type="InterPro" id="IPR036263">
    <property type="entry name" value="Chorismate_II_sf"/>
</dbReference>
<dbReference type="InterPro" id="IPR036979">
    <property type="entry name" value="CM_dom_sf"/>
</dbReference>
<dbReference type="InterPro" id="IPR002701">
    <property type="entry name" value="CM_II_prokaryot"/>
</dbReference>
<dbReference type="InterPro" id="IPR010957">
    <property type="entry name" value="G/b/e-P-prot_chorismate_mutase"/>
</dbReference>
<dbReference type="InterPro" id="IPR001086">
    <property type="entry name" value="Preph_deHydtase"/>
</dbReference>
<dbReference type="InterPro" id="IPR018528">
    <property type="entry name" value="Preph_deHydtase_CS"/>
</dbReference>
<dbReference type="NCBIfam" id="TIGR01807">
    <property type="entry name" value="CM_P2"/>
    <property type="match status" value="1"/>
</dbReference>
<dbReference type="NCBIfam" id="NF008865">
    <property type="entry name" value="PRK11898.1"/>
    <property type="match status" value="1"/>
</dbReference>
<dbReference type="PANTHER" id="PTHR21022">
    <property type="entry name" value="PREPHENATE DEHYDRATASE P PROTEIN"/>
    <property type="match status" value="1"/>
</dbReference>
<dbReference type="PANTHER" id="PTHR21022:SF19">
    <property type="entry name" value="PREPHENATE DEHYDRATASE-RELATED"/>
    <property type="match status" value="1"/>
</dbReference>
<dbReference type="Pfam" id="PF01842">
    <property type="entry name" value="ACT"/>
    <property type="match status" value="1"/>
</dbReference>
<dbReference type="Pfam" id="PF01817">
    <property type="entry name" value="CM_2"/>
    <property type="match status" value="1"/>
</dbReference>
<dbReference type="Pfam" id="PF00800">
    <property type="entry name" value="PDT"/>
    <property type="match status" value="1"/>
</dbReference>
<dbReference type="PIRSF" id="PIRSF001500">
    <property type="entry name" value="Chor_mut_pdt_Ppr"/>
    <property type="match status" value="1"/>
</dbReference>
<dbReference type="SMART" id="SM00830">
    <property type="entry name" value="CM_2"/>
    <property type="match status" value="1"/>
</dbReference>
<dbReference type="SUPFAM" id="SSF55021">
    <property type="entry name" value="ACT-like"/>
    <property type="match status" value="1"/>
</dbReference>
<dbReference type="SUPFAM" id="SSF48600">
    <property type="entry name" value="Chorismate mutase II"/>
    <property type="match status" value="1"/>
</dbReference>
<dbReference type="SUPFAM" id="SSF53850">
    <property type="entry name" value="Periplasmic binding protein-like II"/>
    <property type="match status" value="1"/>
</dbReference>
<dbReference type="PROSITE" id="PS51671">
    <property type="entry name" value="ACT"/>
    <property type="match status" value="1"/>
</dbReference>
<dbReference type="PROSITE" id="PS51168">
    <property type="entry name" value="CHORISMATE_MUT_2"/>
    <property type="match status" value="1"/>
</dbReference>
<dbReference type="PROSITE" id="PS00857">
    <property type="entry name" value="PREPHENATE_DEHYDR_1"/>
    <property type="match status" value="1"/>
</dbReference>
<dbReference type="PROSITE" id="PS00858">
    <property type="entry name" value="PREPHENATE_DEHYDR_2"/>
    <property type="match status" value="1"/>
</dbReference>
<dbReference type="PROSITE" id="PS51171">
    <property type="entry name" value="PREPHENATE_DEHYDR_3"/>
    <property type="match status" value="1"/>
</dbReference>
<reference key="1">
    <citation type="journal article" date="1991" name="J. Gen. Microbiol.">
        <title>Cloning, sequencing, and expression of the P-protein gene (pheA) of Pseudomonas stutzeri in Escherichia coli: implications for evolutionary relationships in phenylalanine biosynthesis.</title>
        <authorList>
            <person name="Fischer R.S."/>
            <person name="Zhao G."/>
            <person name="Jensen R.A."/>
        </authorList>
    </citation>
    <scope>NUCLEOTIDE SEQUENCE [GENOMIC DNA]</scope>
    <scope>FUNCTION</scope>
    <scope>CATALYTIC ACTIVITY</scope>
    <source>
        <strain>DSM 10701 / IAM 15110 / JCM 21571 / JM300</strain>
    </source>
</reference>
<reference key="2">
    <citation type="journal article" date="1999" name="J. Mol. Evol.">
        <title>A probable mixed-function supraoperon in Pseudomonas exhibits gene organization features of both intergenomic conservation and gene shuffling.</title>
        <authorList>
            <person name="Xie G."/>
            <person name="Bonner C.A."/>
            <person name="Jensen R.A."/>
        </authorList>
    </citation>
    <scope>SEQUENCE REVISION</scope>
    <source>
        <strain>DSM 10701 / IAM 15110 / JCM 21571 / JM300</strain>
    </source>
</reference>
<protein>
    <recommendedName>
        <fullName evidence="8">Bifunctional chorismate mutase/prephenate dehydratase</fullName>
    </recommendedName>
    <alternativeName>
        <fullName evidence="8">Chorismate mutase-prephenate dehydratase</fullName>
    </alternativeName>
    <alternativeName>
        <fullName evidence="7">P-protein</fullName>
    </alternativeName>
    <domain>
        <recommendedName>
            <fullName evidence="7">Chorismate mutase</fullName>
            <shortName evidence="7">CM</shortName>
            <ecNumber evidence="6">5.4.99.5</ecNumber>
        </recommendedName>
    </domain>
    <domain>
        <recommendedName>
            <fullName evidence="7">Prephenate dehydratase</fullName>
            <shortName evidence="7">PDT</shortName>
            <ecNumber evidence="6">4.2.1.51</ecNumber>
        </recommendedName>
    </domain>
</protein>
<keyword id="KW-0028">Amino-acid biosynthesis</keyword>
<keyword id="KW-0057">Aromatic amino acid biosynthesis</keyword>
<keyword id="KW-0963">Cytoplasm</keyword>
<keyword id="KW-0413">Isomerase</keyword>
<keyword id="KW-0456">Lyase</keyword>
<keyword id="KW-0511">Multifunctional enzyme</keyword>
<keyword id="KW-0584">Phenylalanine biosynthesis</keyword>